<feature type="chain" id="PRO_1000126751" description="Large ribosomal subunit protein bL31">
    <location>
        <begin position="1"/>
        <end position="88"/>
    </location>
</feature>
<feature type="region of interest" description="Disordered" evidence="2">
    <location>
        <begin position="67"/>
        <end position="88"/>
    </location>
</feature>
<feature type="compositionally biased region" description="Basic and acidic residues" evidence="2">
    <location>
        <begin position="74"/>
        <end position="88"/>
    </location>
</feature>
<reference key="1">
    <citation type="journal article" date="2006" name="Proc. Natl. Acad. Sci. U.S.A.">
        <title>Genome sequence of Synechococcus CC9311: insights into adaptation to a coastal environment.</title>
        <authorList>
            <person name="Palenik B."/>
            <person name="Ren Q."/>
            <person name="Dupont C.L."/>
            <person name="Myers G.S."/>
            <person name="Heidelberg J.F."/>
            <person name="Badger J.H."/>
            <person name="Madupu R."/>
            <person name="Nelson W.C."/>
            <person name="Brinkac L.M."/>
            <person name="Dodson R.J."/>
            <person name="Durkin A.S."/>
            <person name="Daugherty S.C."/>
            <person name="Sullivan S.A."/>
            <person name="Khouri H."/>
            <person name="Mohamoud Y."/>
            <person name="Halpin R."/>
            <person name="Paulsen I.T."/>
        </authorList>
    </citation>
    <scope>NUCLEOTIDE SEQUENCE [LARGE SCALE GENOMIC DNA]</scope>
    <source>
        <strain>CC9311</strain>
    </source>
</reference>
<accession>Q0ID33</accession>
<name>RL31_SYNS3</name>
<dbReference type="EMBL" id="CP000435">
    <property type="protein sequence ID" value="ABI45194.1"/>
    <property type="molecule type" value="Genomic_DNA"/>
</dbReference>
<dbReference type="RefSeq" id="WP_011618377.1">
    <property type="nucleotide sequence ID" value="NC_008319.1"/>
</dbReference>
<dbReference type="STRING" id="64471.sync_0409"/>
<dbReference type="KEGG" id="syg:sync_0409"/>
<dbReference type="eggNOG" id="COG0254">
    <property type="taxonomic scope" value="Bacteria"/>
</dbReference>
<dbReference type="HOGENOM" id="CLU_114306_1_2_3"/>
<dbReference type="OrthoDB" id="9803251at2"/>
<dbReference type="Proteomes" id="UP000001961">
    <property type="component" value="Chromosome"/>
</dbReference>
<dbReference type="GO" id="GO:1990904">
    <property type="term" value="C:ribonucleoprotein complex"/>
    <property type="evidence" value="ECO:0007669"/>
    <property type="project" value="UniProtKB-KW"/>
</dbReference>
<dbReference type="GO" id="GO:0005840">
    <property type="term" value="C:ribosome"/>
    <property type="evidence" value="ECO:0007669"/>
    <property type="project" value="UniProtKB-KW"/>
</dbReference>
<dbReference type="GO" id="GO:0019843">
    <property type="term" value="F:rRNA binding"/>
    <property type="evidence" value="ECO:0007669"/>
    <property type="project" value="UniProtKB-KW"/>
</dbReference>
<dbReference type="GO" id="GO:0003735">
    <property type="term" value="F:structural constituent of ribosome"/>
    <property type="evidence" value="ECO:0007669"/>
    <property type="project" value="InterPro"/>
</dbReference>
<dbReference type="GO" id="GO:0006412">
    <property type="term" value="P:translation"/>
    <property type="evidence" value="ECO:0007669"/>
    <property type="project" value="UniProtKB-UniRule"/>
</dbReference>
<dbReference type="Gene3D" id="4.10.830.30">
    <property type="entry name" value="Ribosomal protein L31"/>
    <property type="match status" value="1"/>
</dbReference>
<dbReference type="HAMAP" id="MF_00501">
    <property type="entry name" value="Ribosomal_bL31_1"/>
    <property type="match status" value="1"/>
</dbReference>
<dbReference type="InterPro" id="IPR034704">
    <property type="entry name" value="Ribosomal_bL28/bL31-like_sf"/>
</dbReference>
<dbReference type="InterPro" id="IPR002150">
    <property type="entry name" value="Ribosomal_bL31"/>
</dbReference>
<dbReference type="InterPro" id="IPR027491">
    <property type="entry name" value="Ribosomal_bL31_A"/>
</dbReference>
<dbReference type="InterPro" id="IPR042105">
    <property type="entry name" value="Ribosomal_bL31_sf"/>
</dbReference>
<dbReference type="NCBIfam" id="TIGR00105">
    <property type="entry name" value="L31"/>
    <property type="match status" value="1"/>
</dbReference>
<dbReference type="NCBIfam" id="NF001809">
    <property type="entry name" value="PRK00528.1"/>
    <property type="match status" value="1"/>
</dbReference>
<dbReference type="PANTHER" id="PTHR33280">
    <property type="entry name" value="50S RIBOSOMAL PROTEIN L31, CHLOROPLASTIC"/>
    <property type="match status" value="1"/>
</dbReference>
<dbReference type="PANTHER" id="PTHR33280:SF1">
    <property type="entry name" value="LARGE RIBOSOMAL SUBUNIT PROTEIN BL31C"/>
    <property type="match status" value="1"/>
</dbReference>
<dbReference type="Pfam" id="PF01197">
    <property type="entry name" value="Ribosomal_L31"/>
    <property type="match status" value="1"/>
</dbReference>
<dbReference type="PRINTS" id="PR01249">
    <property type="entry name" value="RIBOSOMALL31"/>
</dbReference>
<dbReference type="SUPFAM" id="SSF143800">
    <property type="entry name" value="L28p-like"/>
    <property type="match status" value="1"/>
</dbReference>
<dbReference type="PROSITE" id="PS01143">
    <property type="entry name" value="RIBOSOMAL_L31"/>
    <property type="match status" value="1"/>
</dbReference>
<organism>
    <name type="scientific">Synechococcus sp. (strain CC9311)</name>
    <dbReference type="NCBI Taxonomy" id="64471"/>
    <lineage>
        <taxon>Bacteria</taxon>
        <taxon>Bacillati</taxon>
        <taxon>Cyanobacteriota</taxon>
        <taxon>Cyanophyceae</taxon>
        <taxon>Synechococcales</taxon>
        <taxon>Synechococcaceae</taxon>
        <taxon>Synechococcus</taxon>
    </lineage>
</organism>
<comment type="function">
    <text evidence="1">Binds the 23S rRNA.</text>
</comment>
<comment type="subunit">
    <text evidence="1">Part of the 50S ribosomal subunit.</text>
</comment>
<comment type="similarity">
    <text evidence="1">Belongs to the bacterial ribosomal protein bL31 family. Type A subfamily.</text>
</comment>
<keyword id="KW-1185">Reference proteome</keyword>
<keyword id="KW-0687">Ribonucleoprotein</keyword>
<keyword id="KW-0689">Ribosomal protein</keyword>
<keyword id="KW-0694">RNA-binding</keyword>
<keyword id="KW-0699">rRNA-binding</keyword>
<evidence type="ECO:0000255" key="1">
    <source>
        <dbReference type="HAMAP-Rule" id="MF_00501"/>
    </source>
</evidence>
<evidence type="ECO:0000256" key="2">
    <source>
        <dbReference type="SAM" id="MobiDB-lite"/>
    </source>
</evidence>
<evidence type="ECO:0000305" key="3"/>
<gene>
    <name evidence="1" type="primary">rpmE</name>
    <name evidence="1" type="synonym">rpl31</name>
    <name type="ordered locus">sync_0409</name>
</gene>
<sequence>MPKPDIHPTWYPDAKVICNGEVVMTTGSTQPEINVDVWSGNHPFFTGTQKILDTEGRVDRFMRKYGMGSVDNATSEKKSATDETSKES</sequence>
<proteinExistence type="inferred from homology"/>
<protein>
    <recommendedName>
        <fullName evidence="1">Large ribosomal subunit protein bL31</fullName>
    </recommendedName>
    <alternativeName>
        <fullName evidence="3">50S ribosomal protein L31</fullName>
    </alternativeName>
</protein>